<sequence>MSVIKDCFLNLLDRWRPPKTSRPWKPGQRVALVWPKDRCLVIRRRWRLVRDEGRDAQRLASYLCCPEPLRFVGSICTYNFLKHKGDHNVPSELYLGASGAMYLWTDHIYSDSLTFVAESITEFLNIGLRRCNFITVPEELPHTASLRALAGCMHIHAFAQWRATYRGRLMVMGDYSVIRVSTIRLYDWSEINDWRVMVGSNHVEPLGWLVSPYDVINLFVDDCMRVFAANNQHVCIVADSLMEFVTRGMTRCHENGIYYGTRSMRKLNKPTCPYGVDHQLFDDA</sequence>
<name>UL23_HCMVM</name>
<comment type="function">
    <text evidence="1">Plays a role in the inhibition of host innate immune response by disrupting the interaction between NMI and STAT1. In turn, NMI-mediated transcription of interferon-gamma stimulated genes is inhibited.</text>
</comment>
<comment type="subunit">
    <text evidence="1">Interacts with host NMI; this interaction inhibits NMI interaction with STAT1.</text>
</comment>
<comment type="subcellular location">
    <subcellularLocation>
        <location evidence="1">Virion tegument</location>
    </subcellularLocation>
    <subcellularLocation>
        <location evidence="1">Host cytoplasm</location>
    </subcellularLocation>
</comment>
<comment type="similarity">
    <text evidence="2">Belongs to the herpesviridae US22 family.</text>
</comment>
<reference key="1">
    <citation type="journal article" date="2004" name="J. Gen. Virol.">
        <title>Genetic content of wild-type human cytomegalovirus.</title>
        <authorList>
            <person name="Dolan A."/>
            <person name="Cunningham C."/>
            <person name="Hector R.D."/>
            <person name="Hassan-Walker A.F."/>
            <person name="Lee L."/>
            <person name="Addison C."/>
            <person name="Dargan D.J."/>
            <person name="McGeoch D.J."/>
            <person name="Gatherer D."/>
            <person name="Emery V.C."/>
            <person name="Griffiths P.D."/>
            <person name="Sinzger C."/>
            <person name="McSharry B.P."/>
            <person name="Wilkinson G.W.G."/>
            <person name="Davison A.J."/>
        </authorList>
    </citation>
    <scope>NUCLEOTIDE SEQUENCE [LARGE SCALE GENOMIC DNA]</scope>
    <source>
        <strain>Merlin</strain>
    </source>
</reference>
<organism>
    <name type="scientific">Human cytomegalovirus (strain Merlin)</name>
    <name type="common">HHV-5</name>
    <name type="synonym">Human herpesvirus 5</name>
    <dbReference type="NCBI Taxonomy" id="295027"/>
    <lineage>
        <taxon>Viruses</taxon>
        <taxon>Duplodnaviria</taxon>
        <taxon>Heunggongvirae</taxon>
        <taxon>Peploviricota</taxon>
        <taxon>Herviviricetes</taxon>
        <taxon>Herpesvirales</taxon>
        <taxon>Orthoherpesviridae</taxon>
        <taxon>Betaherpesvirinae</taxon>
        <taxon>Cytomegalovirus</taxon>
        <taxon>Cytomegalovirus humanbeta5</taxon>
        <taxon>Human cytomegalovirus</taxon>
    </lineage>
</organism>
<protein>
    <recommendedName>
        <fullName>Tegument protein UL23</fullName>
    </recommendedName>
</protein>
<feature type="chain" id="PRO_0000416715" description="Tegument protein UL23">
    <location>
        <begin position="1"/>
        <end position="284"/>
    </location>
</feature>
<keyword id="KW-1035">Host cytoplasm</keyword>
<keyword id="KW-1185">Reference proteome</keyword>
<keyword id="KW-0946">Virion</keyword>
<keyword id="KW-0920">Virion tegument</keyword>
<evidence type="ECO:0000250" key="1">
    <source>
        <dbReference type="UniProtKB" id="P16846"/>
    </source>
</evidence>
<evidence type="ECO:0000305" key="2"/>
<dbReference type="EMBL" id="AY446894">
    <property type="protein sequence ID" value="AAR31588.1"/>
    <property type="molecule type" value="Genomic_DNA"/>
</dbReference>
<dbReference type="RefSeq" id="YP_081482.1">
    <property type="nucleotide sequence ID" value="NC_006273.2"/>
</dbReference>
<dbReference type="DNASU" id="3077524"/>
<dbReference type="GeneID" id="3077524"/>
<dbReference type="KEGG" id="vg:3077524"/>
<dbReference type="Reactome" id="R-HSA-9609690">
    <property type="pathway name" value="HCMV Early Events"/>
</dbReference>
<dbReference type="Reactome" id="R-HSA-9610379">
    <property type="pathway name" value="HCMV Late Events"/>
</dbReference>
<dbReference type="Proteomes" id="UP000000938">
    <property type="component" value="Segment"/>
</dbReference>
<dbReference type="GO" id="GO:0072517">
    <property type="term" value="C:host cell viral assembly compartment"/>
    <property type="evidence" value="ECO:0000304"/>
    <property type="project" value="Reactome"/>
</dbReference>
<dbReference type="GO" id="GO:0019033">
    <property type="term" value="C:viral tegument"/>
    <property type="evidence" value="ECO:0000304"/>
    <property type="project" value="Reactome"/>
</dbReference>
<dbReference type="InterPro" id="IPR003360">
    <property type="entry name" value="US22-like"/>
</dbReference>
<dbReference type="Pfam" id="PF02393">
    <property type="entry name" value="US22"/>
    <property type="match status" value="2"/>
</dbReference>
<accession>F5HDM3</accession>
<gene>
    <name type="primary">UL23</name>
</gene>
<proteinExistence type="inferred from homology"/>
<organismHost>
    <name type="scientific">Homo sapiens</name>
    <name type="common">Human</name>
    <dbReference type="NCBI Taxonomy" id="9606"/>
</organismHost>